<sequence>MGKVYDWFEERLEIQAIADDITSKYVPPHVNIFYCLGGITLTCFLVQVATGFAMTFYYRPTVTEAFASVQYIMTEVNFGWLIRSVHRWSASMMVLMMILHVFRVYLTGGFKKPRELTWVTGVILAVLTVSFGVTGYSSPWDQIGYWAVKIVTGVPEAIPVVGSPLVELSRGSVSVGQSTLTRFYSLHTFVSPLLTAVFMLMHFLMIRKQGISGPL</sequence>
<keyword id="KW-0150">Chloroplast</keyword>
<keyword id="KW-0249">Electron transport</keyword>
<keyword id="KW-0349">Heme</keyword>
<keyword id="KW-0408">Iron</keyword>
<keyword id="KW-0472">Membrane</keyword>
<keyword id="KW-0479">Metal-binding</keyword>
<keyword id="KW-0602">Photosynthesis</keyword>
<keyword id="KW-0934">Plastid</keyword>
<keyword id="KW-0793">Thylakoid</keyword>
<keyword id="KW-0812">Transmembrane</keyword>
<keyword id="KW-1133">Transmembrane helix</keyword>
<keyword id="KW-0813">Transport</keyword>
<reference key="1">
    <citation type="journal article" date="2005" name="Gene">
        <title>The first complete chloroplast genome sequence of a lycophyte, Huperzia lucidula (Lycopodiaceae).</title>
        <authorList>
            <person name="Wolf P.G."/>
            <person name="Karol K.G."/>
            <person name="Mandoli D.F."/>
            <person name="Kuehl J.V."/>
            <person name="Arumuganathan K."/>
            <person name="Ellis M.W."/>
            <person name="Mishler B.D."/>
            <person name="Kelch D.G."/>
            <person name="Olmstead R.G."/>
            <person name="Boore J.L."/>
        </authorList>
    </citation>
    <scope>NUCLEOTIDE SEQUENCE [LARGE SCALE GENOMIC DNA]</scope>
</reference>
<proteinExistence type="inferred from homology"/>
<evidence type="ECO:0000255" key="1">
    <source>
        <dbReference type="HAMAP-Rule" id="MF_00633"/>
    </source>
</evidence>
<name>CYB6_HUPLU</name>
<comment type="function">
    <text evidence="1">Component of the cytochrome b6-f complex, which mediates electron transfer between photosystem II (PSII) and photosystem I (PSI), cyclic electron flow around PSI, and state transitions.</text>
</comment>
<comment type="cofactor">
    <cofactor evidence="1">
        <name>heme b</name>
        <dbReference type="ChEBI" id="CHEBI:60344"/>
    </cofactor>
    <text evidence="1">Binds 2 heme b groups non-covalently with two histidine residues as axial ligands.</text>
</comment>
<comment type="cofactor">
    <cofactor evidence="1">
        <name>heme c</name>
        <dbReference type="ChEBI" id="CHEBI:61717"/>
    </cofactor>
    <text evidence="1">Binds one heme group covalently by a single cysteine link with no axial amino acid ligand. This heme was named heme ci.</text>
</comment>
<comment type="subunit">
    <text evidence="1">The 4 large subunits of the cytochrome b6-f complex are cytochrome b6, subunit IV (17 kDa polypeptide, PetD), cytochrome f and the Rieske protein, while the 4 small subunits are PetG, PetL, PetM and PetN. The complex functions as a dimer.</text>
</comment>
<comment type="subcellular location">
    <subcellularLocation>
        <location evidence="1">Plastid</location>
        <location evidence="1">Chloroplast thylakoid membrane</location>
        <topology evidence="1">Multi-pass membrane protein</topology>
    </subcellularLocation>
</comment>
<comment type="miscellaneous">
    <text evidence="1">Heme 1 (or BH or b566) is high-potential and absorbs at about 566 nm, and heme 2 (or BL or b562) is low-potential and absorbs at about 562 nm.</text>
</comment>
<comment type="similarity">
    <text evidence="1">Belongs to the cytochrome b family. PetB subfamily.</text>
</comment>
<geneLocation type="chloroplast"/>
<protein>
    <recommendedName>
        <fullName evidence="1">Cytochrome b6</fullName>
    </recommendedName>
</protein>
<gene>
    <name evidence="1" type="primary">petB</name>
</gene>
<feature type="chain" id="PRO_0000061798" description="Cytochrome b6">
    <location>
        <begin position="1"/>
        <end position="215"/>
    </location>
</feature>
<feature type="transmembrane region" description="Helical" evidence="1">
    <location>
        <begin position="32"/>
        <end position="52"/>
    </location>
</feature>
<feature type="transmembrane region" description="Helical" evidence="1">
    <location>
        <begin position="90"/>
        <end position="110"/>
    </location>
</feature>
<feature type="transmembrane region" description="Helical" evidence="1">
    <location>
        <begin position="116"/>
        <end position="136"/>
    </location>
</feature>
<feature type="transmembrane region" description="Helical" evidence="1">
    <location>
        <begin position="186"/>
        <end position="206"/>
    </location>
</feature>
<feature type="binding site" description="covalent" evidence="1">
    <location>
        <position position="35"/>
    </location>
    <ligand>
        <name>heme c</name>
        <dbReference type="ChEBI" id="CHEBI:61717"/>
    </ligand>
</feature>
<feature type="binding site" description="axial binding residue" evidence="1">
    <location>
        <position position="86"/>
    </location>
    <ligand>
        <name>heme b</name>
        <dbReference type="ChEBI" id="CHEBI:60344"/>
        <label>2</label>
    </ligand>
    <ligandPart>
        <name>Fe</name>
        <dbReference type="ChEBI" id="CHEBI:18248"/>
    </ligandPart>
</feature>
<feature type="binding site" description="axial binding residue" evidence="1">
    <location>
        <position position="100"/>
    </location>
    <ligand>
        <name>heme b</name>
        <dbReference type="ChEBI" id="CHEBI:60344"/>
        <label>1</label>
    </ligand>
    <ligandPart>
        <name>Fe</name>
        <dbReference type="ChEBI" id="CHEBI:18248"/>
    </ligandPart>
</feature>
<feature type="binding site" description="axial binding residue" evidence="1">
    <location>
        <position position="187"/>
    </location>
    <ligand>
        <name>heme b</name>
        <dbReference type="ChEBI" id="CHEBI:60344"/>
        <label>2</label>
    </ligand>
    <ligandPart>
        <name>Fe</name>
        <dbReference type="ChEBI" id="CHEBI:18248"/>
    </ligandPart>
</feature>
<feature type="binding site" description="axial binding residue" evidence="1">
    <location>
        <position position="202"/>
    </location>
    <ligand>
        <name>heme b</name>
        <dbReference type="ChEBI" id="CHEBI:60344"/>
        <label>1</label>
    </ligand>
    <ligandPart>
        <name>Fe</name>
        <dbReference type="ChEBI" id="CHEBI:18248"/>
    </ligandPart>
</feature>
<dbReference type="EMBL" id="AY660566">
    <property type="protein sequence ID" value="AAT80695.1"/>
    <property type="molecule type" value="Genomic_DNA"/>
</dbReference>
<dbReference type="RefSeq" id="YP_209499.1">
    <property type="nucleotide sequence ID" value="NC_006861.1"/>
</dbReference>
<dbReference type="SMR" id="Q5SD23"/>
<dbReference type="GeneID" id="3283766"/>
<dbReference type="GO" id="GO:0009535">
    <property type="term" value="C:chloroplast thylakoid membrane"/>
    <property type="evidence" value="ECO:0007669"/>
    <property type="project" value="UniProtKB-SubCell"/>
</dbReference>
<dbReference type="GO" id="GO:0045158">
    <property type="term" value="F:electron transporter, transferring electrons within cytochrome b6/f complex of photosystem II activity"/>
    <property type="evidence" value="ECO:0007669"/>
    <property type="project" value="UniProtKB-UniRule"/>
</dbReference>
<dbReference type="GO" id="GO:0046872">
    <property type="term" value="F:metal ion binding"/>
    <property type="evidence" value="ECO:0007669"/>
    <property type="project" value="UniProtKB-KW"/>
</dbReference>
<dbReference type="GO" id="GO:0016491">
    <property type="term" value="F:oxidoreductase activity"/>
    <property type="evidence" value="ECO:0007669"/>
    <property type="project" value="InterPro"/>
</dbReference>
<dbReference type="GO" id="GO:0015979">
    <property type="term" value="P:photosynthesis"/>
    <property type="evidence" value="ECO:0007669"/>
    <property type="project" value="UniProtKB-UniRule"/>
</dbReference>
<dbReference type="GO" id="GO:0022904">
    <property type="term" value="P:respiratory electron transport chain"/>
    <property type="evidence" value="ECO:0007669"/>
    <property type="project" value="InterPro"/>
</dbReference>
<dbReference type="CDD" id="cd00284">
    <property type="entry name" value="Cytochrome_b_N"/>
    <property type="match status" value="1"/>
</dbReference>
<dbReference type="FunFam" id="1.20.810.10:FF:000001">
    <property type="entry name" value="Cytochrome b6"/>
    <property type="match status" value="1"/>
</dbReference>
<dbReference type="Gene3D" id="1.20.810.10">
    <property type="entry name" value="Cytochrome Bc1 Complex, Chain C"/>
    <property type="match status" value="1"/>
</dbReference>
<dbReference type="HAMAP" id="MF_00633">
    <property type="entry name" value="Cytb6_f_cytb6"/>
    <property type="match status" value="1"/>
</dbReference>
<dbReference type="InterPro" id="IPR005797">
    <property type="entry name" value="Cyt_b/b6_N"/>
</dbReference>
<dbReference type="InterPro" id="IPR023530">
    <property type="entry name" value="Cyt_B6_PetB"/>
</dbReference>
<dbReference type="InterPro" id="IPR027387">
    <property type="entry name" value="Cytb/b6-like_sf"/>
</dbReference>
<dbReference type="InterPro" id="IPR048259">
    <property type="entry name" value="Cytochrome_b_N_euk/bac"/>
</dbReference>
<dbReference type="InterPro" id="IPR016174">
    <property type="entry name" value="Di-haem_cyt_TM"/>
</dbReference>
<dbReference type="NCBIfam" id="NF002990">
    <property type="entry name" value="PRK03735.1"/>
    <property type="match status" value="1"/>
</dbReference>
<dbReference type="PANTHER" id="PTHR19271">
    <property type="entry name" value="CYTOCHROME B"/>
    <property type="match status" value="1"/>
</dbReference>
<dbReference type="PANTHER" id="PTHR19271:SF16">
    <property type="entry name" value="CYTOCHROME B"/>
    <property type="match status" value="1"/>
</dbReference>
<dbReference type="Pfam" id="PF00033">
    <property type="entry name" value="Cytochrome_B"/>
    <property type="match status" value="1"/>
</dbReference>
<dbReference type="PIRSF" id="PIRSF000032">
    <property type="entry name" value="Cytochrome_b6"/>
    <property type="match status" value="1"/>
</dbReference>
<dbReference type="SUPFAM" id="SSF81342">
    <property type="entry name" value="Transmembrane di-heme cytochromes"/>
    <property type="match status" value="1"/>
</dbReference>
<dbReference type="PROSITE" id="PS51002">
    <property type="entry name" value="CYTB_NTER"/>
    <property type="match status" value="1"/>
</dbReference>
<accession>Q5SD23</accession>
<organism>
    <name type="scientific">Huperzia lucidula</name>
    <name type="common">Shining clubmoss</name>
    <name type="synonym">Lycopodium lucidulum</name>
    <dbReference type="NCBI Taxonomy" id="37429"/>
    <lineage>
        <taxon>Eukaryota</taxon>
        <taxon>Viridiplantae</taxon>
        <taxon>Streptophyta</taxon>
        <taxon>Embryophyta</taxon>
        <taxon>Tracheophyta</taxon>
        <taxon>Lycopodiopsida</taxon>
        <taxon>Lycopodiales</taxon>
        <taxon>Lycopodiaceae</taxon>
        <taxon>Huperzioideae</taxon>
        <taxon>Huperzia</taxon>
    </lineage>
</organism>